<reference key="1">
    <citation type="journal article" date="2004" name="Nature">
        <title>Genome evolution in yeasts.</title>
        <authorList>
            <person name="Dujon B."/>
            <person name="Sherman D."/>
            <person name="Fischer G."/>
            <person name="Durrens P."/>
            <person name="Casaregola S."/>
            <person name="Lafontaine I."/>
            <person name="de Montigny J."/>
            <person name="Marck C."/>
            <person name="Neuveglise C."/>
            <person name="Talla E."/>
            <person name="Goffard N."/>
            <person name="Frangeul L."/>
            <person name="Aigle M."/>
            <person name="Anthouard V."/>
            <person name="Babour A."/>
            <person name="Barbe V."/>
            <person name="Barnay S."/>
            <person name="Blanchin S."/>
            <person name="Beckerich J.-M."/>
            <person name="Beyne E."/>
            <person name="Bleykasten C."/>
            <person name="Boisrame A."/>
            <person name="Boyer J."/>
            <person name="Cattolico L."/>
            <person name="Confanioleri F."/>
            <person name="de Daruvar A."/>
            <person name="Despons L."/>
            <person name="Fabre E."/>
            <person name="Fairhead C."/>
            <person name="Ferry-Dumazet H."/>
            <person name="Groppi A."/>
            <person name="Hantraye F."/>
            <person name="Hennequin C."/>
            <person name="Jauniaux N."/>
            <person name="Joyet P."/>
            <person name="Kachouri R."/>
            <person name="Kerrest A."/>
            <person name="Koszul R."/>
            <person name="Lemaire M."/>
            <person name="Lesur I."/>
            <person name="Ma L."/>
            <person name="Muller H."/>
            <person name="Nicaud J.-M."/>
            <person name="Nikolski M."/>
            <person name="Oztas S."/>
            <person name="Ozier-Kalogeropoulos O."/>
            <person name="Pellenz S."/>
            <person name="Potier S."/>
            <person name="Richard G.-F."/>
            <person name="Straub M.-L."/>
            <person name="Suleau A."/>
            <person name="Swennen D."/>
            <person name="Tekaia F."/>
            <person name="Wesolowski-Louvel M."/>
            <person name="Westhof E."/>
            <person name="Wirth B."/>
            <person name="Zeniou-Meyer M."/>
            <person name="Zivanovic Y."/>
            <person name="Bolotin-Fukuhara M."/>
            <person name="Thierry A."/>
            <person name="Bouchier C."/>
            <person name="Caudron B."/>
            <person name="Scarpelli C."/>
            <person name="Gaillardin C."/>
            <person name="Weissenbach J."/>
            <person name="Wincker P."/>
            <person name="Souciet J.-L."/>
        </authorList>
    </citation>
    <scope>NUCLEOTIDE SEQUENCE [LARGE SCALE GENOMIC DNA]</scope>
    <source>
        <strain>CLIB 122 / E 150</strain>
    </source>
</reference>
<sequence>MEDKRNAESASLGASSGGDSKRARVAARPVSLEDVAEFQKEAIFRAMETYRREKETLEKQLETQGEKERELEERVVRLGTWWDKVADRLALVVGKYEFEKSKVKTEDVKKEEDTERDAGDEDEVEVAPGPTGLATDLELEEKSASISSHFSTLLDLIGDKISKQDKTEVSRLSAGYTDMAEQRHLLVRKIQDLEHEAQTMKNQYLAAAKKLDRYKSPTVKLIEGEDVEEKAEENGDQKTAQMEEKKETEDSPDTKDTGDTKALRETIQVQEEQMKELDAKIAALEHEASLFNAKMADLSESDLLDHSGAFKAAKEQLSDKTGQILALEKSRDAISAEKMALDENRQQYRSTIKREFEKRESELRSQLSRAETDLVRIRTARDEILADLSQKKATEADKLKTIESLKELGEVYKLRIGTLESEVQRWRKEGNEGVNMSSNVEGKSLEELKKEVTVLTLTNQSLMAEIPGMEAAFVSAQKMAENKALDVADRESRLTKLLAEKAKADEKYFAAMRHKDALGAENAKLKAQMVKSSELVNQLQEVDAKTRAKIDVLEKTLSEYVSLHAKQQEAAKRLTSQVAEKTHMLNGAQKYLTTLKEEMKQQGTKLSVGEHRARKLALDNAKLTKQIELSSFGGSSDEIDELRSIAMCSLCSKNWKDTALKVCGHVFCHQCAQDRLDARLRKCPNCNKPFSQNDLLTVHL</sequence>
<accession>Q6CF78</accession>
<name>BRE1_YARLI</name>
<gene>
    <name type="primary">BRE1</name>
    <name type="ordered locus">YALI0B09559g</name>
</gene>
<protein>
    <recommendedName>
        <fullName>E3 ubiquitin-protein ligase BRE1</fullName>
        <ecNumber evidence="1">2.3.2.27</ecNumber>
    </recommendedName>
    <alternativeName>
        <fullName evidence="5">RING-type E3 ubiquitin transferase BRE1</fullName>
    </alternativeName>
</protein>
<proteinExistence type="inferred from homology"/>
<evidence type="ECO:0000250" key="1">
    <source>
        <dbReference type="UniProtKB" id="Q07457"/>
    </source>
</evidence>
<evidence type="ECO:0000255" key="2"/>
<evidence type="ECO:0000255" key="3">
    <source>
        <dbReference type="PROSITE-ProRule" id="PRU00175"/>
    </source>
</evidence>
<evidence type="ECO:0000256" key="4">
    <source>
        <dbReference type="SAM" id="MobiDB-lite"/>
    </source>
</evidence>
<evidence type="ECO:0000305" key="5"/>
<comment type="function">
    <text evidence="1">E3 ubiquitin-protein ligase that mediates monoubiquitination of histone H2B to form H2BK123ub1. H2BK123ub1 gives a specific tag for epigenetic transcriptional activation and is also a prerequisite for H3K4me and H3K79me formation.</text>
</comment>
<comment type="catalytic activity">
    <reaction evidence="1">
        <text>S-ubiquitinyl-[E2 ubiquitin-conjugating enzyme]-L-cysteine + [acceptor protein]-L-lysine = [E2 ubiquitin-conjugating enzyme]-L-cysteine + N(6)-ubiquitinyl-[acceptor protein]-L-lysine.</text>
        <dbReference type="EC" id="2.3.2.27"/>
    </reaction>
</comment>
<comment type="pathway">
    <text>Protein modification; protein ubiquitination.</text>
</comment>
<comment type="subcellular location">
    <subcellularLocation>
        <location evidence="1">Nucleus</location>
    </subcellularLocation>
</comment>
<comment type="similarity">
    <text evidence="5">Belongs to the BRE1 family.</text>
</comment>
<feature type="chain" id="PRO_0000055856" description="E3 ubiquitin-protein ligase BRE1">
    <location>
        <begin position="1"/>
        <end position="700"/>
    </location>
</feature>
<feature type="zinc finger region" description="RING-type" evidence="3">
    <location>
        <begin position="648"/>
        <end position="687"/>
    </location>
</feature>
<feature type="region of interest" description="Disordered" evidence="4">
    <location>
        <begin position="1"/>
        <end position="28"/>
    </location>
</feature>
<feature type="region of interest" description="Disordered" evidence="4">
    <location>
        <begin position="102"/>
        <end position="131"/>
    </location>
</feature>
<feature type="region of interest" description="Disordered" evidence="4">
    <location>
        <begin position="224"/>
        <end position="261"/>
    </location>
</feature>
<feature type="coiled-coil region" evidence="2">
    <location>
        <begin position="39"/>
        <end position="78"/>
    </location>
</feature>
<feature type="coiled-coil region" evidence="2">
    <location>
        <begin position="178"/>
        <end position="383"/>
    </location>
</feature>
<feature type="compositionally biased region" description="Low complexity" evidence="4">
    <location>
        <begin position="8"/>
        <end position="18"/>
    </location>
</feature>
<feature type="compositionally biased region" description="Basic and acidic residues" evidence="4">
    <location>
        <begin position="102"/>
        <end position="117"/>
    </location>
</feature>
<feature type="compositionally biased region" description="Basic and acidic residues" evidence="4">
    <location>
        <begin position="232"/>
        <end position="261"/>
    </location>
</feature>
<keyword id="KW-0156">Chromatin regulator</keyword>
<keyword id="KW-0175">Coiled coil</keyword>
<keyword id="KW-0479">Metal-binding</keyword>
<keyword id="KW-0539">Nucleus</keyword>
<keyword id="KW-1185">Reference proteome</keyword>
<keyword id="KW-0808">Transferase</keyword>
<keyword id="KW-0833">Ubl conjugation pathway</keyword>
<keyword id="KW-0862">Zinc</keyword>
<keyword id="KW-0863">Zinc-finger</keyword>
<dbReference type="EC" id="2.3.2.27" evidence="1"/>
<dbReference type="EMBL" id="CR382128">
    <property type="protein sequence ID" value="CAG82928.1"/>
    <property type="molecule type" value="Genomic_DNA"/>
</dbReference>
<dbReference type="RefSeq" id="XP_500684.1">
    <property type="nucleotide sequence ID" value="XM_500684.1"/>
</dbReference>
<dbReference type="SMR" id="Q6CF78"/>
<dbReference type="FunCoup" id="Q6CF78">
    <property type="interactions" value="922"/>
</dbReference>
<dbReference type="STRING" id="284591.Q6CF78"/>
<dbReference type="EnsemblFungi" id="CAG82928">
    <property type="protein sequence ID" value="CAG82928"/>
    <property type="gene ID" value="YALI0_B09559g"/>
</dbReference>
<dbReference type="KEGG" id="yli:2906810"/>
<dbReference type="VEuPathDB" id="FungiDB:YALI0_B09559g"/>
<dbReference type="HOGENOM" id="CLU_019713_2_0_1"/>
<dbReference type="InParanoid" id="Q6CF78"/>
<dbReference type="OMA" id="YRQMQEY"/>
<dbReference type="OrthoDB" id="2799at4891"/>
<dbReference type="UniPathway" id="UPA00143"/>
<dbReference type="Proteomes" id="UP000001300">
    <property type="component" value="Chromosome B"/>
</dbReference>
<dbReference type="GO" id="GO:0033503">
    <property type="term" value="C:HULC complex"/>
    <property type="evidence" value="ECO:0000318"/>
    <property type="project" value="GO_Central"/>
</dbReference>
<dbReference type="GO" id="GO:0005634">
    <property type="term" value="C:nucleus"/>
    <property type="evidence" value="ECO:0000318"/>
    <property type="project" value="GO_Central"/>
</dbReference>
<dbReference type="GO" id="GO:0061630">
    <property type="term" value="F:ubiquitin protein ligase activity"/>
    <property type="evidence" value="ECO:0000318"/>
    <property type="project" value="GO_Central"/>
</dbReference>
<dbReference type="GO" id="GO:0008270">
    <property type="term" value="F:zinc ion binding"/>
    <property type="evidence" value="ECO:0007669"/>
    <property type="project" value="UniProtKB-KW"/>
</dbReference>
<dbReference type="GO" id="GO:0006325">
    <property type="term" value="P:chromatin organization"/>
    <property type="evidence" value="ECO:0007669"/>
    <property type="project" value="UniProtKB-KW"/>
</dbReference>
<dbReference type="GO" id="GO:0016567">
    <property type="term" value="P:protein ubiquitination"/>
    <property type="evidence" value="ECO:0007669"/>
    <property type="project" value="UniProtKB-UniPathway"/>
</dbReference>
<dbReference type="CDD" id="cd16499">
    <property type="entry name" value="RING-HC_Bre1-like"/>
    <property type="match status" value="1"/>
</dbReference>
<dbReference type="Gene3D" id="3.30.40.10">
    <property type="entry name" value="Zinc/RING finger domain, C3HC4 (zinc finger)"/>
    <property type="match status" value="1"/>
</dbReference>
<dbReference type="InterPro" id="IPR013956">
    <property type="entry name" value="E3_ubiquit_lig_Bre1"/>
</dbReference>
<dbReference type="InterPro" id="IPR013087">
    <property type="entry name" value="Znf_C2H2_type"/>
</dbReference>
<dbReference type="InterPro" id="IPR001841">
    <property type="entry name" value="Znf_RING"/>
</dbReference>
<dbReference type="InterPro" id="IPR013083">
    <property type="entry name" value="Znf_RING/FYVE/PHD"/>
</dbReference>
<dbReference type="InterPro" id="IPR017907">
    <property type="entry name" value="Znf_RING_CS"/>
</dbReference>
<dbReference type="PANTHER" id="PTHR23163:SF0">
    <property type="entry name" value="E3 UBIQUITIN-PROTEIN LIGASE BRE1"/>
    <property type="match status" value="1"/>
</dbReference>
<dbReference type="PANTHER" id="PTHR23163">
    <property type="entry name" value="RING FINGER PROTEIN-RELATED"/>
    <property type="match status" value="1"/>
</dbReference>
<dbReference type="Pfam" id="PF08647">
    <property type="entry name" value="BRE1"/>
    <property type="match status" value="1"/>
</dbReference>
<dbReference type="Pfam" id="PF13920">
    <property type="entry name" value="zf-C3HC4_3"/>
    <property type="match status" value="1"/>
</dbReference>
<dbReference type="SMART" id="SM00184">
    <property type="entry name" value="RING"/>
    <property type="match status" value="1"/>
</dbReference>
<dbReference type="SUPFAM" id="SSF57850">
    <property type="entry name" value="RING/U-box"/>
    <property type="match status" value="1"/>
</dbReference>
<dbReference type="PROSITE" id="PS00518">
    <property type="entry name" value="ZF_RING_1"/>
    <property type="match status" value="1"/>
</dbReference>
<dbReference type="PROSITE" id="PS50089">
    <property type="entry name" value="ZF_RING_2"/>
    <property type="match status" value="1"/>
</dbReference>
<organism>
    <name type="scientific">Yarrowia lipolytica (strain CLIB 122 / E 150)</name>
    <name type="common">Yeast</name>
    <name type="synonym">Candida lipolytica</name>
    <dbReference type="NCBI Taxonomy" id="284591"/>
    <lineage>
        <taxon>Eukaryota</taxon>
        <taxon>Fungi</taxon>
        <taxon>Dikarya</taxon>
        <taxon>Ascomycota</taxon>
        <taxon>Saccharomycotina</taxon>
        <taxon>Dipodascomycetes</taxon>
        <taxon>Dipodascales</taxon>
        <taxon>Dipodascales incertae sedis</taxon>
        <taxon>Yarrowia</taxon>
    </lineage>
</organism>